<comment type="catalytic activity">
    <reaction>
        <text>(1S,2R)-1-C-(indol-3-yl)glycerol 3-phosphate + L-serine = D-glyceraldehyde 3-phosphate + L-tryptophan + H2O</text>
        <dbReference type="Rhea" id="RHEA:10532"/>
        <dbReference type="ChEBI" id="CHEBI:15377"/>
        <dbReference type="ChEBI" id="CHEBI:33384"/>
        <dbReference type="ChEBI" id="CHEBI:57912"/>
        <dbReference type="ChEBI" id="CHEBI:58866"/>
        <dbReference type="ChEBI" id="CHEBI:59776"/>
        <dbReference type="EC" id="4.2.1.20"/>
    </reaction>
</comment>
<comment type="cofactor">
    <cofactor>
        <name>pyridoxal 5'-phosphate</name>
        <dbReference type="ChEBI" id="CHEBI:597326"/>
    </cofactor>
</comment>
<comment type="pathway">
    <text>Amino-acid biosynthesis; L-tryptophan biosynthesis; L-tryptophan from chorismate: step 5/5.</text>
</comment>
<comment type="miscellaneous">
    <text evidence="2">Present with 15500 molecules/cell in log phase SD medium.</text>
</comment>
<comment type="similarity">
    <text evidence="3">In the N-terminal section; belongs to the TrpA family.</text>
</comment>
<comment type="similarity">
    <text evidence="3">In the C-terminal section; belongs to the TrpB family.</text>
</comment>
<protein>
    <recommendedName>
        <fullName>Tryptophan synthase</fullName>
        <ecNumber>4.2.1.20</ecNumber>
    </recommendedName>
</protein>
<feature type="chain" id="PRO_0000098726" description="Tryptophan synthase">
    <location>
        <begin position="1"/>
        <end position="707"/>
    </location>
</feature>
<feature type="region of interest" description="Tryptophan synthase alpha chain">
    <location>
        <begin position="1"/>
        <end position="297"/>
    </location>
</feature>
<feature type="region of interest" description="Tryptophan synthase beta chain">
    <location>
        <begin position="298"/>
        <end position="707"/>
    </location>
</feature>
<feature type="active site" description="Proton acceptor" evidence="1">
    <location>
        <position position="50"/>
    </location>
</feature>
<feature type="active site" description="Proton acceptor" evidence="1">
    <location>
        <position position="61"/>
    </location>
</feature>
<feature type="modified residue" description="N6-(pyridoxal phosphate)lysine" evidence="1">
    <location>
        <position position="384"/>
    </location>
</feature>
<feature type="modified residue" description="Phosphoserine" evidence="4">
    <location>
        <position position="540"/>
    </location>
</feature>
<feature type="modified residue" description="Phosphoserine" evidence="4">
    <location>
        <position position="683"/>
    </location>
</feature>
<proteinExistence type="evidence at protein level"/>
<evidence type="ECO:0000250" key="1"/>
<evidence type="ECO:0000269" key="2">
    <source>
    </source>
</evidence>
<evidence type="ECO:0000305" key="3"/>
<evidence type="ECO:0007744" key="4">
    <source>
    </source>
</evidence>
<reference key="1">
    <citation type="journal article" date="1982" name="J. Biol. Chem.">
        <title>Yeast gene TRP5: structure, function, regulation.</title>
        <authorList>
            <person name="Zalkin H."/>
            <person name="Yanofsky C."/>
        </authorList>
    </citation>
    <scope>NUCLEOTIDE SEQUENCE [GENOMIC DNA]</scope>
</reference>
<reference key="2">
    <citation type="journal article" date="1997" name="Nature">
        <title>The nucleotide sequence of Saccharomyces cerevisiae chromosome VII.</title>
        <authorList>
            <person name="Tettelin H."/>
            <person name="Agostoni-Carbone M.L."/>
            <person name="Albermann K."/>
            <person name="Albers M."/>
            <person name="Arroyo J."/>
            <person name="Backes U."/>
            <person name="Barreiros T."/>
            <person name="Bertani I."/>
            <person name="Bjourson A.J."/>
            <person name="Brueckner M."/>
            <person name="Bruschi C.V."/>
            <person name="Carignani G."/>
            <person name="Castagnoli L."/>
            <person name="Cerdan E."/>
            <person name="Clemente M.L."/>
            <person name="Coblenz A."/>
            <person name="Coglievina M."/>
            <person name="Coissac E."/>
            <person name="Defoor E."/>
            <person name="Del Bino S."/>
            <person name="Delius H."/>
            <person name="Delneri D."/>
            <person name="de Wergifosse P."/>
            <person name="Dujon B."/>
            <person name="Durand P."/>
            <person name="Entian K.-D."/>
            <person name="Eraso P."/>
            <person name="Escribano V."/>
            <person name="Fabiani L."/>
            <person name="Fartmann B."/>
            <person name="Feroli F."/>
            <person name="Feuermann M."/>
            <person name="Frontali L."/>
            <person name="Garcia-Gonzalez M."/>
            <person name="Garcia-Saez M.I."/>
            <person name="Goffeau A."/>
            <person name="Guerreiro P."/>
            <person name="Hani J."/>
            <person name="Hansen M."/>
            <person name="Hebling U."/>
            <person name="Hernandez K."/>
            <person name="Heumann K."/>
            <person name="Hilger F."/>
            <person name="Hofmann B."/>
            <person name="Indge K.J."/>
            <person name="James C.M."/>
            <person name="Klima R."/>
            <person name="Koetter P."/>
            <person name="Kramer B."/>
            <person name="Kramer W."/>
            <person name="Lauquin G."/>
            <person name="Leuther H."/>
            <person name="Louis E.J."/>
            <person name="Maillier E."/>
            <person name="Marconi A."/>
            <person name="Martegani E."/>
            <person name="Mazon M.J."/>
            <person name="Mazzoni C."/>
            <person name="McReynolds A.D.K."/>
            <person name="Melchioretto P."/>
            <person name="Mewes H.-W."/>
            <person name="Minenkova O."/>
            <person name="Mueller-Auer S."/>
            <person name="Nawrocki A."/>
            <person name="Netter P."/>
            <person name="Neu R."/>
            <person name="Nombela C."/>
            <person name="Oliver S.G."/>
            <person name="Panzeri L."/>
            <person name="Paoluzi S."/>
            <person name="Plevani P."/>
            <person name="Portetelle D."/>
            <person name="Portillo F."/>
            <person name="Potier S."/>
            <person name="Purnelle B."/>
            <person name="Rieger M."/>
            <person name="Riles L."/>
            <person name="Rinaldi T."/>
            <person name="Robben J."/>
            <person name="Rodrigues-Pousada C."/>
            <person name="Rodriguez-Belmonte E."/>
            <person name="Rodriguez-Torres A.M."/>
            <person name="Rose M."/>
            <person name="Ruzzi M."/>
            <person name="Saliola M."/>
            <person name="Sanchez-Perez M."/>
            <person name="Schaefer B."/>
            <person name="Schaefer M."/>
            <person name="Scharfe M."/>
            <person name="Schmidheini T."/>
            <person name="Schreer A."/>
            <person name="Skala J."/>
            <person name="Souciet J.-L."/>
            <person name="Steensma H.Y."/>
            <person name="Talla E."/>
            <person name="Thierry A."/>
            <person name="Vandenbol M."/>
            <person name="van der Aart Q.J.M."/>
            <person name="Van Dyck L."/>
            <person name="Vanoni M."/>
            <person name="Verhasselt P."/>
            <person name="Voet M."/>
            <person name="Volckaert G."/>
            <person name="Wambutt R."/>
            <person name="Watson M.D."/>
            <person name="Weber N."/>
            <person name="Wedler E."/>
            <person name="Wedler H."/>
            <person name="Wipfli P."/>
            <person name="Wolf K."/>
            <person name="Wright L.F."/>
            <person name="Zaccaria P."/>
            <person name="Zimmermann M."/>
            <person name="Zollner A."/>
            <person name="Kleine K."/>
        </authorList>
    </citation>
    <scope>NUCLEOTIDE SEQUENCE [LARGE SCALE GENOMIC DNA]</scope>
    <source>
        <strain>ATCC 204508 / S288c</strain>
    </source>
</reference>
<reference key="3">
    <citation type="journal article" date="2014" name="G3 (Bethesda)">
        <title>The reference genome sequence of Saccharomyces cerevisiae: Then and now.</title>
        <authorList>
            <person name="Engel S.R."/>
            <person name="Dietrich F.S."/>
            <person name="Fisk D.G."/>
            <person name="Binkley G."/>
            <person name="Balakrishnan R."/>
            <person name="Costanzo M.C."/>
            <person name="Dwight S.S."/>
            <person name="Hitz B.C."/>
            <person name="Karra K."/>
            <person name="Nash R.S."/>
            <person name="Weng S."/>
            <person name="Wong E.D."/>
            <person name="Lloyd P."/>
            <person name="Skrzypek M.S."/>
            <person name="Miyasato S.R."/>
            <person name="Simison M."/>
            <person name="Cherry J.M."/>
        </authorList>
    </citation>
    <scope>GENOME REANNOTATION</scope>
    <source>
        <strain>ATCC 204508 / S288c</strain>
    </source>
</reference>
<reference key="4">
    <citation type="journal article" date="1982" name="Gene">
        <title>DNA sequences flanking an E. coli insertion element IS2 in a cloned yeast TRP5 gene.</title>
        <authorList>
            <person name="Brosius J."/>
            <person name="Walz A."/>
        </authorList>
    </citation>
    <scope>NUCLEOTIDE SEQUENCE [GENOMIC DNA] OF 1-172</scope>
</reference>
<reference key="5">
    <citation type="journal article" date="2003" name="Nature">
        <title>Global analysis of protein expression in yeast.</title>
        <authorList>
            <person name="Ghaemmaghami S."/>
            <person name="Huh W.-K."/>
            <person name="Bower K."/>
            <person name="Howson R.W."/>
            <person name="Belle A."/>
            <person name="Dephoure N."/>
            <person name="O'Shea E.K."/>
            <person name="Weissman J.S."/>
        </authorList>
    </citation>
    <scope>LEVEL OF PROTEIN EXPRESSION [LARGE SCALE ANALYSIS]</scope>
</reference>
<reference key="6">
    <citation type="journal article" date="2008" name="Mol. Cell. Proteomics">
        <title>A multidimensional chromatography technology for in-depth phosphoproteome analysis.</title>
        <authorList>
            <person name="Albuquerque C.P."/>
            <person name="Smolka M.B."/>
            <person name="Payne S.H."/>
            <person name="Bafna V."/>
            <person name="Eng J."/>
            <person name="Zhou H."/>
        </authorList>
    </citation>
    <scope>PHOSPHORYLATION [LARGE SCALE ANALYSIS] AT SER-540 AND SER-683</scope>
    <scope>IDENTIFICATION BY MASS SPECTROMETRY [LARGE SCALE ANALYSIS]</scope>
</reference>
<reference key="7">
    <citation type="journal article" date="2009" name="Science">
        <title>Global analysis of Cdk1 substrate phosphorylation sites provides insights into evolution.</title>
        <authorList>
            <person name="Holt L.J."/>
            <person name="Tuch B.B."/>
            <person name="Villen J."/>
            <person name="Johnson A.D."/>
            <person name="Gygi S.P."/>
            <person name="Morgan D.O."/>
        </authorList>
    </citation>
    <scope>IDENTIFICATION BY MASS SPECTROMETRY [LARGE SCALE ANALYSIS]</scope>
</reference>
<sequence length="707" mass="76626">MSEQLRQTFANAKKENRNALVTFMTAGYPTVKDTVPILKGFQDGGVDIIELGMPFSDPIADGPTIQLSNTVALQNGVTLPQTLEMVSQARNEGVTVPIILMGYYNPILNYGEERFIQDAAKAGANGFIIVDLPPEEALKVRNYINDNGLSLIPLVAPSTTDERLELLSHIADSFVYVVSRMGTTGVQSSVASDLDELISRVRKYTKDTPLAVGFGVSTREHFQSVGSVADGVVIGSKIVTLCGDAPEGKRYDVAKEYVQGILNGAKHKVLSKDEFFAFQKESLKSANVKKEILDEFDENHKHPIRFGDFGGQYVPEALHACLRELEKGFDEAVADPTFWEDFKSLYSYIGRPSSLHKAERLTEHCQGAQIWLKREDLNHTGSHKINNALAQVLLAKRLGKKNVIAETGAGQHGVATATACAKFGLTCTVFMGAEDVRRQALNVFRMRILGAKVIAVTNGTKTLRDATSEAFRFWVTNLKTTYYVVGSAIGPHPYPTLVRTFQSVIGKETKEQFAAMNNGKLPDAVVACVGGGSNSTGMFSPFEHDTSVKLLGVEAGGDGVDTKFHSATLTAGRPGVFHGVKTYVLQDSDGQVHDTHSVSAGLDYPGVGPELAYWKSTGRAQFIAATDAQALLGFKLLSQLEGIIPALESSHAVYGACELAKTMKPDQHLVINISGRGDKDVQSVAEVLPKLGPKIGWDLRFEEDPSA</sequence>
<keyword id="KW-0028">Amino-acid biosynthesis</keyword>
<keyword id="KW-0057">Aromatic amino acid biosynthesis</keyword>
<keyword id="KW-0456">Lyase</keyword>
<keyword id="KW-0597">Phosphoprotein</keyword>
<keyword id="KW-0663">Pyridoxal phosphate</keyword>
<keyword id="KW-1185">Reference proteome</keyword>
<keyword id="KW-0822">Tryptophan biosynthesis</keyword>
<accession>P00931</accession>
<accession>D6VUB2</accession>
<organism>
    <name type="scientific">Saccharomyces cerevisiae (strain ATCC 204508 / S288c)</name>
    <name type="common">Baker's yeast</name>
    <dbReference type="NCBI Taxonomy" id="559292"/>
    <lineage>
        <taxon>Eukaryota</taxon>
        <taxon>Fungi</taxon>
        <taxon>Dikarya</taxon>
        <taxon>Ascomycota</taxon>
        <taxon>Saccharomycotina</taxon>
        <taxon>Saccharomycetes</taxon>
        <taxon>Saccharomycetales</taxon>
        <taxon>Saccharomycetaceae</taxon>
        <taxon>Saccharomyces</taxon>
    </lineage>
</organism>
<dbReference type="EC" id="4.2.1.20"/>
<dbReference type="EMBL" id="V01342">
    <property type="protein sequence ID" value="CAA24635.1"/>
    <property type="molecule type" value="Genomic_DNA"/>
</dbReference>
<dbReference type="EMBL" id="V01343">
    <property type="protein sequence ID" value="CAA24636.1"/>
    <property type="molecule type" value="Genomic_DNA"/>
</dbReference>
<dbReference type="EMBL" id="Z72548">
    <property type="protein sequence ID" value="CAA96727.1"/>
    <property type="molecule type" value="Genomic_DNA"/>
</dbReference>
<dbReference type="EMBL" id="BK006941">
    <property type="protein sequence ID" value="DAA08073.1"/>
    <property type="molecule type" value="Genomic_DNA"/>
</dbReference>
<dbReference type="PIR" id="A01154">
    <property type="entry name" value="TSBYAB"/>
</dbReference>
<dbReference type="RefSeq" id="NP_011489.1">
    <property type="nucleotide sequence ID" value="NM_001180891.1"/>
</dbReference>
<dbReference type="SMR" id="P00931"/>
<dbReference type="BioGRID" id="33221">
    <property type="interactions" value="55"/>
</dbReference>
<dbReference type="DIP" id="DIP-1398N"/>
<dbReference type="FunCoup" id="P00931">
    <property type="interactions" value="596"/>
</dbReference>
<dbReference type="IntAct" id="P00931">
    <property type="interactions" value="18"/>
</dbReference>
<dbReference type="MINT" id="P00931"/>
<dbReference type="STRING" id="4932.YGL026C"/>
<dbReference type="GlyGen" id="P00931">
    <property type="glycosylation" value="2 sites, 1 O-linked glycan (2 sites)"/>
</dbReference>
<dbReference type="iPTMnet" id="P00931"/>
<dbReference type="PaxDb" id="4932-YGL026C"/>
<dbReference type="PeptideAtlas" id="P00931"/>
<dbReference type="EnsemblFungi" id="YGL026C_mRNA">
    <property type="protein sequence ID" value="YGL026C"/>
    <property type="gene ID" value="YGL026C"/>
</dbReference>
<dbReference type="GeneID" id="852858"/>
<dbReference type="KEGG" id="sce:YGL026C"/>
<dbReference type="AGR" id="SGD:S000002994"/>
<dbReference type="SGD" id="S000002994">
    <property type="gene designation" value="TRP5"/>
</dbReference>
<dbReference type="VEuPathDB" id="FungiDB:YGL026C"/>
<dbReference type="eggNOG" id="KOG1395">
    <property type="taxonomic scope" value="Eukaryota"/>
</dbReference>
<dbReference type="eggNOG" id="KOG4175">
    <property type="taxonomic scope" value="Eukaryota"/>
</dbReference>
<dbReference type="HOGENOM" id="CLU_016734_1_1_1"/>
<dbReference type="InParanoid" id="P00931"/>
<dbReference type="OMA" id="VDTARHS"/>
<dbReference type="OrthoDB" id="10050244at2759"/>
<dbReference type="BioCyc" id="YEAST:YGL026C-MONOMER"/>
<dbReference type="UniPathway" id="UPA00035">
    <property type="reaction ID" value="UER00044"/>
</dbReference>
<dbReference type="BioGRID-ORCS" id="852858">
    <property type="hits" value="2 hits in 10 CRISPR screens"/>
</dbReference>
<dbReference type="PRO" id="PR:P00931"/>
<dbReference type="Proteomes" id="UP000002311">
    <property type="component" value="Chromosome VII"/>
</dbReference>
<dbReference type="RNAct" id="P00931">
    <property type="molecule type" value="protein"/>
</dbReference>
<dbReference type="GO" id="GO:0005737">
    <property type="term" value="C:cytoplasm"/>
    <property type="evidence" value="ECO:0007005"/>
    <property type="project" value="SGD"/>
</dbReference>
<dbReference type="GO" id="GO:0005634">
    <property type="term" value="C:nucleus"/>
    <property type="evidence" value="ECO:0007005"/>
    <property type="project" value="SGD"/>
</dbReference>
<dbReference type="GO" id="GO:0004834">
    <property type="term" value="F:tryptophan synthase activity"/>
    <property type="evidence" value="ECO:0000314"/>
    <property type="project" value="SGD"/>
</dbReference>
<dbReference type="GO" id="GO:0000162">
    <property type="term" value="P:L-tryptophan biosynthetic process"/>
    <property type="evidence" value="ECO:0000315"/>
    <property type="project" value="SGD"/>
</dbReference>
<dbReference type="CDD" id="cd06446">
    <property type="entry name" value="Trp-synth_B"/>
    <property type="match status" value="1"/>
</dbReference>
<dbReference type="CDD" id="cd04724">
    <property type="entry name" value="Tryptophan_synthase_alpha"/>
    <property type="match status" value="1"/>
</dbReference>
<dbReference type="FunFam" id="3.20.20.70:FF:000151">
    <property type="entry name" value="Tryptophan synthase"/>
    <property type="match status" value="1"/>
</dbReference>
<dbReference type="FunFam" id="3.40.50.1100:FF:000001">
    <property type="entry name" value="Tryptophan synthase beta chain"/>
    <property type="match status" value="1"/>
</dbReference>
<dbReference type="FunFam" id="3.40.50.1100:FF:000004">
    <property type="entry name" value="Tryptophan synthase beta chain"/>
    <property type="match status" value="1"/>
</dbReference>
<dbReference type="Gene3D" id="3.40.50.1100">
    <property type="match status" value="2"/>
</dbReference>
<dbReference type="Gene3D" id="3.20.20.70">
    <property type="entry name" value="Aldolase class I"/>
    <property type="match status" value="1"/>
</dbReference>
<dbReference type="HAMAP" id="MF_00131">
    <property type="entry name" value="Trp_synth_alpha"/>
    <property type="match status" value="1"/>
</dbReference>
<dbReference type="HAMAP" id="MF_00133">
    <property type="entry name" value="Trp_synth_beta"/>
    <property type="match status" value="1"/>
</dbReference>
<dbReference type="InterPro" id="IPR013785">
    <property type="entry name" value="Aldolase_TIM"/>
</dbReference>
<dbReference type="InterPro" id="IPR011060">
    <property type="entry name" value="RibuloseP-bd_barrel"/>
</dbReference>
<dbReference type="InterPro" id="IPR006653">
    <property type="entry name" value="Trp_synth_b_CS"/>
</dbReference>
<dbReference type="InterPro" id="IPR006654">
    <property type="entry name" value="Trp_synth_beta"/>
</dbReference>
<dbReference type="InterPro" id="IPR023026">
    <property type="entry name" value="Trp_synth_beta/beta-like"/>
</dbReference>
<dbReference type="InterPro" id="IPR018204">
    <property type="entry name" value="Trp_synthase_alpha_AS"/>
</dbReference>
<dbReference type="InterPro" id="IPR002028">
    <property type="entry name" value="Trp_synthase_suA"/>
</dbReference>
<dbReference type="InterPro" id="IPR001926">
    <property type="entry name" value="TrpB-like_PALP"/>
</dbReference>
<dbReference type="InterPro" id="IPR036052">
    <property type="entry name" value="TrpB-like_PALP_sf"/>
</dbReference>
<dbReference type="NCBIfam" id="TIGR00262">
    <property type="entry name" value="trpA"/>
    <property type="match status" value="1"/>
</dbReference>
<dbReference type="NCBIfam" id="TIGR00263">
    <property type="entry name" value="trpB"/>
    <property type="match status" value="1"/>
</dbReference>
<dbReference type="PANTHER" id="PTHR48077:SF3">
    <property type="entry name" value="TRYPTOPHAN SYNTHASE"/>
    <property type="match status" value="1"/>
</dbReference>
<dbReference type="PANTHER" id="PTHR48077">
    <property type="entry name" value="TRYPTOPHAN SYNTHASE-RELATED"/>
    <property type="match status" value="1"/>
</dbReference>
<dbReference type="Pfam" id="PF00291">
    <property type="entry name" value="PALP"/>
    <property type="match status" value="1"/>
</dbReference>
<dbReference type="Pfam" id="PF00290">
    <property type="entry name" value="Trp_syntA"/>
    <property type="match status" value="1"/>
</dbReference>
<dbReference type="SUPFAM" id="SSF51366">
    <property type="entry name" value="Ribulose-phoshate binding barrel"/>
    <property type="match status" value="1"/>
</dbReference>
<dbReference type="SUPFAM" id="SSF53686">
    <property type="entry name" value="Tryptophan synthase beta subunit-like PLP-dependent enzymes"/>
    <property type="match status" value="1"/>
</dbReference>
<dbReference type="PROSITE" id="PS00167">
    <property type="entry name" value="TRP_SYNTHASE_ALPHA"/>
    <property type="match status" value="1"/>
</dbReference>
<dbReference type="PROSITE" id="PS00168">
    <property type="entry name" value="TRP_SYNTHASE_BETA"/>
    <property type="match status" value="1"/>
</dbReference>
<name>TRP_YEAST</name>
<gene>
    <name type="primary">TRP5</name>
    <name type="ordered locus">YGL026C</name>
</gene>